<name>YPAB_ECOLI</name>
<accession>A0A385XJK5</accession>
<keyword id="KW-1185">Reference proteome</keyword>
<protein>
    <recommendedName>
        <fullName>Protein YpaB</fullName>
    </recommendedName>
</protein>
<organism>
    <name type="scientific">Escherichia coli (strain K12)</name>
    <dbReference type="NCBI Taxonomy" id="83333"/>
    <lineage>
        <taxon>Bacteria</taxon>
        <taxon>Pseudomonadati</taxon>
        <taxon>Pseudomonadota</taxon>
        <taxon>Gammaproteobacteria</taxon>
        <taxon>Enterobacterales</taxon>
        <taxon>Enterobacteriaceae</taxon>
        <taxon>Escherichia</taxon>
    </lineage>
</organism>
<proteinExistence type="predicted"/>
<feature type="chain" id="PRO_0000446260" description="Protein YpaB">
    <location>
        <begin position="1"/>
        <end position="47"/>
    </location>
</feature>
<reference key="1">
    <citation type="journal article" date="1997" name="Science">
        <title>The complete genome sequence of Escherichia coli K-12.</title>
        <authorList>
            <person name="Blattner F.R."/>
            <person name="Plunkett G. III"/>
            <person name="Bloch C.A."/>
            <person name="Perna N.T."/>
            <person name="Burland V."/>
            <person name="Riley M."/>
            <person name="Collado-Vides J."/>
            <person name="Glasner J.D."/>
            <person name="Rode C.K."/>
            <person name="Mayhew G.F."/>
            <person name="Gregor J."/>
            <person name="Davis N.W."/>
            <person name="Kirkpatrick H.A."/>
            <person name="Goeden M.A."/>
            <person name="Rose D.J."/>
            <person name="Mau B."/>
            <person name="Shao Y."/>
        </authorList>
    </citation>
    <scope>NUCLEOTIDE SEQUENCE [LARGE SCALE GENOMIC DNA]</scope>
    <source>
        <strain>K12 / MG1655 / ATCC 47076</strain>
    </source>
</reference>
<sequence length="47" mass="5325">MTLLQVHNFVDNSGRKKWLSRTLGQTRCPGKSMGREKFVKNNCSAIS</sequence>
<dbReference type="EMBL" id="U00096">
    <property type="protein sequence ID" value="AYC08230.1"/>
    <property type="molecule type" value="Genomic_DNA"/>
</dbReference>
<dbReference type="EnsemblBacteria" id="AYC08230">
    <property type="protein sequence ID" value="AYC08230"/>
    <property type="gene ID" value="b4605"/>
</dbReference>
<dbReference type="InParanoid" id="A0A385XJK5"/>
<dbReference type="PRO" id="PR:A0A385XJK5"/>
<dbReference type="Proteomes" id="UP000000625">
    <property type="component" value="Chromosome"/>
</dbReference>
<gene>
    <name type="primary">ypaB</name>
    <name type="ordered locus">b4605</name>
</gene>